<reference key="1">
    <citation type="journal article" date="2009" name="J. Bacteriol.">
        <title>The genome of Burkholderia cenocepacia J2315, an epidemic pathogen of cystic fibrosis patients.</title>
        <authorList>
            <person name="Holden M.T."/>
            <person name="Seth-Smith H.M."/>
            <person name="Crossman L.C."/>
            <person name="Sebaihia M."/>
            <person name="Bentley S.D."/>
            <person name="Cerdeno-Tarraga A.M."/>
            <person name="Thomson N.R."/>
            <person name="Bason N."/>
            <person name="Quail M.A."/>
            <person name="Sharp S."/>
            <person name="Cherevach I."/>
            <person name="Churcher C."/>
            <person name="Goodhead I."/>
            <person name="Hauser H."/>
            <person name="Holroyd N."/>
            <person name="Mungall K."/>
            <person name="Scott P."/>
            <person name="Walker D."/>
            <person name="White B."/>
            <person name="Rose H."/>
            <person name="Iversen P."/>
            <person name="Mil-Homens D."/>
            <person name="Rocha E.P."/>
            <person name="Fialho A.M."/>
            <person name="Baldwin A."/>
            <person name="Dowson C."/>
            <person name="Barrell B.G."/>
            <person name="Govan J.R."/>
            <person name="Vandamme P."/>
            <person name="Hart C.A."/>
            <person name="Mahenthiralingam E."/>
            <person name="Parkhill J."/>
        </authorList>
    </citation>
    <scope>NUCLEOTIDE SEQUENCE [LARGE SCALE GENOMIC DNA]</scope>
    <source>
        <strain>ATCC BAA-245 / DSM 16553 / LMG 16656 / NCTC 13227 / J2315 / CF5610</strain>
    </source>
</reference>
<keyword id="KW-0414">Isoprene biosynthesis</keyword>
<keyword id="KW-0460">Magnesium</keyword>
<keyword id="KW-0479">Metal-binding</keyword>
<keyword id="KW-0784">Thiamine biosynthesis</keyword>
<keyword id="KW-0786">Thiamine pyrophosphate</keyword>
<keyword id="KW-0808">Transferase</keyword>
<feature type="chain" id="PRO_1000115727" description="1-deoxy-D-xylulose-5-phosphate synthase">
    <location>
        <begin position="1"/>
        <end position="634"/>
    </location>
</feature>
<feature type="binding site" evidence="1">
    <location>
        <position position="74"/>
    </location>
    <ligand>
        <name>thiamine diphosphate</name>
        <dbReference type="ChEBI" id="CHEBI:58937"/>
    </ligand>
</feature>
<feature type="binding site" evidence="1">
    <location>
        <begin position="115"/>
        <end position="117"/>
    </location>
    <ligand>
        <name>thiamine diphosphate</name>
        <dbReference type="ChEBI" id="CHEBI:58937"/>
    </ligand>
</feature>
<feature type="binding site" evidence="1">
    <location>
        <position position="146"/>
    </location>
    <ligand>
        <name>Mg(2+)</name>
        <dbReference type="ChEBI" id="CHEBI:18420"/>
    </ligand>
</feature>
<feature type="binding site" evidence="1">
    <location>
        <begin position="147"/>
        <end position="148"/>
    </location>
    <ligand>
        <name>thiamine diphosphate</name>
        <dbReference type="ChEBI" id="CHEBI:58937"/>
    </ligand>
</feature>
<feature type="binding site" evidence="1">
    <location>
        <position position="176"/>
    </location>
    <ligand>
        <name>Mg(2+)</name>
        <dbReference type="ChEBI" id="CHEBI:18420"/>
    </ligand>
</feature>
<feature type="binding site" evidence="1">
    <location>
        <position position="176"/>
    </location>
    <ligand>
        <name>thiamine diphosphate</name>
        <dbReference type="ChEBI" id="CHEBI:58937"/>
    </ligand>
</feature>
<feature type="binding site" evidence="1">
    <location>
        <position position="283"/>
    </location>
    <ligand>
        <name>thiamine diphosphate</name>
        <dbReference type="ChEBI" id="CHEBI:58937"/>
    </ligand>
</feature>
<feature type="binding site" evidence="1">
    <location>
        <position position="365"/>
    </location>
    <ligand>
        <name>thiamine diphosphate</name>
        <dbReference type="ChEBI" id="CHEBI:58937"/>
    </ligand>
</feature>
<organism>
    <name type="scientific">Burkholderia cenocepacia (strain ATCC BAA-245 / DSM 16553 / LMG 16656 / NCTC 13227 / J2315 / CF5610)</name>
    <name type="common">Burkholderia cepacia (strain J2315)</name>
    <dbReference type="NCBI Taxonomy" id="216591"/>
    <lineage>
        <taxon>Bacteria</taxon>
        <taxon>Pseudomonadati</taxon>
        <taxon>Pseudomonadota</taxon>
        <taxon>Betaproteobacteria</taxon>
        <taxon>Burkholderiales</taxon>
        <taxon>Burkholderiaceae</taxon>
        <taxon>Burkholderia</taxon>
        <taxon>Burkholderia cepacia complex</taxon>
    </lineage>
</organism>
<accession>B4EN29</accession>
<gene>
    <name evidence="1" type="primary">dxs</name>
    <name type="ordered locus">BceJ2315_43660</name>
    <name type="ORF">BCAM0911</name>
</gene>
<comment type="function">
    <text evidence="1">Catalyzes the acyloin condensation reaction between C atoms 2 and 3 of pyruvate and glyceraldehyde 3-phosphate to yield 1-deoxy-D-xylulose-5-phosphate (DXP).</text>
</comment>
<comment type="catalytic activity">
    <reaction evidence="1">
        <text>D-glyceraldehyde 3-phosphate + pyruvate + H(+) = 1-deoxy-D-xylulose 5-phosphate + CO2</text>
        <dbReference type="Rhea" id="RHEA:12605"/>
        <dbReference type="ChEBI" id="CHEBI:15361"/>
        <dbReference type="ChEBI" id="CHEBI:15378"/>
        <dbReference type="ChEBI" id="CHEBI:16526"/>
        <dbReference type="ChEBI" id="CHEBI:57792"/>
        <dbReference type="ChEBI" id="CHEBI:59776"/>
        <dbReference type="EC" id="2.2.1.7"/>
    </reaction>
</comment>
<comment type="cofactor">
    <cofactor evidence="1">
        <name>Mg(2+)</name>
        <dbReference type="ChEBI" id="CHEBI:18420"/>
    </cofactor>
    <text evidence="1">Binds 1 Mg(2+) ion per subunit.</text>
</comment>
<comment type="cofactor">
    <cofactor evidence="1">
        <name>thiamine diphosphate</name>
        <dbReference type="ChEBI" id="CHEBI:58937"/>
    </cofactor>
    <text evidence="1">Binds 1 thiamine pyrophosphate per subunit.</text>
</comment>
<comment type="pathway">
    <text evidence="1">Metabolic intermediate biosynthesis; 1-deoxy-D-xylulose 5-phosphate biosynthesis; 1-deoxy-D-xylulose 5-phosphate from D-glyceraldehyde 3-phosphate and pyruvate: step 1/1.</text>
</comment>
<comment type="subunit">
    <text evidence="1">Homodimer.</text>
</comment>
<comment type="similarity">
    <text evidence="1">Belongs to the transketolase family. DXPS subfamily.</text>
</comment>
<evidence type="ECO:0000255" key="1">
    <source>
        <dbReference type="HAMAP-Rule" id="MF_00315"/>
    </source>
</evidence>
<name>DXS_BURCJ</name>
<protein>
    <recommendedName>
        <fullName evidence="1">1-deoxy-D-xylulose-5-phosphate synthase</fullName>
        <ecNumber evidence="1">2.2.1.7</ecNumber>
    </recommendedName>
    <alternativeName>
        <fullName evidence="1">1-deoxyxylulose-5-phosphate synthase</fullName>
        <shortName evidence="1">DXP synthase</shortName>
        <shortName evidence="1">DXPS</shortName>
    </alternativeName>
</protein>
<proteinExistence type="inferred from homology"/>
<sequence>MYDLLKTIDDPADLRRLDRRQLQPLADELRAFVLDSVSKTGGHLSSNLGTVELTIALHYVFNTPNDRIVWDVGHQTYPHKILTGRRDQMHSLRQYDGISGFPRRSESEYDTFGTAHSSTSISAALGMAIGSQLNGDDRFSIAVIGDGAMTAGMAFEAMNNAGVSEDAKLLVILNDNDMSISPPVGALNRHLARLMSGRFYAAARAGVERVLSVAPPVLELARKLEEHAKGMVVPATLFEEFGFNYIGPIDGHDLDSLIPTLQNIRELRGPQFLHVVTKKGQGYKLAEADPVLYHGPGKFNPAEGIKPSTTPAKKTYTQVFGEWLCDEAERDTRVVGITPAMREGSGMVEFEKRFKDRYYDVGIAEQHAVTFAGGLATEGLKPVVAIYSTFLQRAYDQLIHDVALQNLPVVFAIDRAGLVGADGATHAGAYDLAFMRCIPNMTIMAASDENECRQMLHTALQQPNPTAVRYPRGAGTGVATVKEFTEIPLGKGEVRRRTSQPEGKRVAILAFGTMVAPSLAAAEELDATVANMRFVKPVDAALVRELAETHDYVVTVEEGCVMGGAGSACVEALMESGVIRPVLQLGLPDLFIDHGDPAKLLSQCGLDGAGIAKSIRERFLNPAADVAGQAKRVA</sequence>
<dbReference type="EC" id="2.2.1.7" evidence="1"/>
<dbReference type="EMBL" id="AM747721">
    <property type="protein sequence ID" value="CAR54768.1"/>
    <property type="molecule type" value="Genomic_DNA"/>
</dbReference>
<dbReference type="RefSeq" id="WP_006486458.1">
    <property type="nucleotide sequence ID" value="NC_011001.1"/>
</dbReference>
<dbReference type="SMR" id="B4EN29"/>
<dbReference type="GeneID" id="56561553"/>
<dbReference type="KEGG" id="bcj:BCAM0911"/>
<dbReference type="eggNOG" id="COG1154">
    <property type="taxonomic scope" value="Bacteria"/>
</dbReference>
<dbReference type="HOGENOM" id="CLU_009227_1_4_4"/>
<dbReference type="BioCyc" id="BCEN216591:G1G1V-4894-MONOMER"/>
<dbReference type="UniPathway" id="UPA00064">
    <property type="reaction ID" value="UER00091"/>
</dbReference>
<dbReference type="Proteomes" id="UP000001035">
    <property type="component" value="Chromosome 2"/>
</dbReference>
<dbReference type="GO" id="GO:0005829">
    <property type="term" value="C:cytosol"/>
    <property type="evidence" value="ECO:0007669"/>
    <property type="project" value="TreeGrafter"/>
</dbReference>
<dbReference type="GO" id="GO:0008661">
    <property type="term" value="F:1-deoxy-D-xylulose-5-phosphate synthase activity"/>
    <property type="evidence" value="ECO:0007669"/>
    <property type="project" value="UniProtKB-UniRule"/>
</dbReference>
<dbReference type="GO" id="GO:0000287">
    <property type="term" value="F:magnesium ion binding"/>
    <property type="evidence" value="ECO:0007669"/>
    <property type="project" value="UniProtKB-UniRule"/>
</dbReference>
<dbReference type="GO" id="GO:0030976">
    <property type="term" value="F:thiamine pyrophosphate binding"/>
    <property type="evidence" value="ECO:0007669"/>
    <property type="project" value="UniProtKB-UniRule"/>
</dbReference>
<dbReference type="GO" id="GO:0052865">
    <property type="term" value="P:1-deoxy-D-xylulose 5-phosphate biosynthetic process"/>
    <property type="evidence" value="ECO:0007669"/>
    <property type="project" value="UniProtKB-UniPathway"/>
</dbReference>
<dbReference type="GO" id="GO:0019288">
    <property type="term" value="P:isopentenyl diphosphate biosynthetic process, methylerythritol 4-phosphate pathway"/>
    <property type="evidence" value="ECO:0007669"/>
    <property type="project" value="TreeGrafter"/>
</dbReference>
<dbReference type="GO" id="GO:0016114">
    <property type="term" value="P:terpenoid biosynthetic process"/>
    <property type="evidence" value="ECO:0007669"/>
    <property type="project" value="UniProtKB-UniRule"/>
</dbReference>
<dbReference type="GO" id="GO:0009228">
    <property type="term" value="P:thiamine biosynthetic process"/>
    <property type="evidence" value="ECO:0007669"/>
    <property type="project" value="UniProtKB-UniRule"/>
</dbReference>
<dbReference type="CDD" id="cd02007">
    <property type="entry name" value="TPP_DXS"/>
    <property type="match status" value="1"/>
</dbReference>
<dbReference type="CDD" id="cd07033">
    <property type="entry name" value="TPP_PYR_DXS_TK_like"/>
    <property type="match status" value="1"/>
</dbReference>
<dbReference type="FunFam" id="3.40.50.920:FF:000002">
    <property type="entry name" value="1-deoxy-D-xylulose-5-phosphate synthase"/>
    <property type="match status" value="1"/>
</dbReference>
<dbReference type="FunFam" id="3.40.50.970:FF:000005">
    <property type="entry name" value="1-deoxy-D-xylulose-5-phosphate synthase"/>
    <property type="match status" value="1"/>
</dbReference>
<dbReference type="Gene3D" id="3.40.50.920">
    <property type="match status" value="1"/>
</dbReference>
<dbReference type="Gene3D" id="3.40.50.970">
    <property type="match status" value="2"/>
</dbReference>
<dbReference type="HAMAP" id="MF_00315">
    <property type="entry name" value="DXP_synth"/>
    <property type="match status" value="1"/>
</dbReference>
<dbReference type="InterPro" id="IPR005477">
    <property type="entry name" value="Dxylulose-5-P_synthase"/>
</dbReference>
<dbReference type="InterPro" id="IPR029061">
    <property type="entry name" value="THDP-binding"/>
</dbReference>
<dbReference type="InterPro" id="IPR009014">
    <property type="entry name" value="Transketo_C/PFOR_II"/>
</dbReference>
<dbReference type="InterPro" id="IPR005475">
    <property type="entry name" value="Transketolase-like_Pyr-bd"/>
</dbReference>
<dbReference type="InterPro" id="IPR020826">
    <property type="entry name" value="Transketolase_BS"/>
</dbReference>
<dbReference type="InterPro" id="IPR033248">
    <property type="entry name" value="Transketolase_C"/>
</dbReference>
<dbReference type="InterPro" id="IPR049557">
    <property type="entry name" value="Transketolase_CS"/>
</dbReference>
<dbReference type="NCBIfam" id="TIGR00204">
    <property type="entry name" value="dxs"/>
    <property type="match status" value="1"/>
</dbReference>
<dbReference type="NCBIfam" id="NF003933">
    <property type="entry name" value="PRK05444.2-2"/>
    <property type="match status" value="1"/>
</dbReference>
<dbReference type="PANTHER" id="PTHR43322">
    <property type="entry name" value="1-D-DEOXYXYLULOSE 5-PHOSPHATE SYNTHASE-RELATED"/>
    <property type="match status" value="1"/>
</dbReference>
<dbReference type="PANTHER" id="PTHR43322:SF5">
    <property type="entry name" value="1-DEOXY-D-XYLULOSE-5-PHOSPHATE SYNTHASE, CHLOROPLASTIC"/>
    <property type="match status" value="1"/>
</dbReference>
<dbReference type="Pfam" id="PF13292">
    <property type="entry name" value="DXP_synthase_N"/>
    <property type="match status" value="1"/>
</dbReference>
<dbReference type="Pfam" id="PF02779">
    <property type="entry name" value="Transket_pyr"/>
    <property type="match status" value="1"/>
</dbReference>
<dbReference type="Pfam" id="PF02780">
    <property type="entry name" value="Transketolase_C"/>
    <property type="match status" value="1"/>
</dbReference>
<dbReference type="SMART" id="SM00861">
    <property type="entry name" value="Transket_pyr"/>
    <property type="match status" value="1"/>
</dbReference>
<dbReference type="SUPFAM" id="SSF52518">
    <property type="entry name" value="Thiamin diphosphate-binding fold (THDP-binding)"/>
    <property type="match status" value="2"/>
</dbReference>
<dbReference type="SUPFAM" id="SSF52922">
    <property type="entry name" value="TK C-terminal domain-like"/>
    <property type="match status" value="1"/>
</dbReference>
<dbReference type="PROSITE" id="PS00801">
    <property type="entry name" value="TRANSKETOLASE_1"/>
    <property type="match status" value="1"/>
</dbReference>
<dbReference type="PROSITE" id="PS00802">
    <property type="entry name" value="TRANSKETOLASE_2"/>
    <property type="match status" value="1"/>
</dbReference>